<gene>
    <name evidence="1" type="primary">moaC</name>
    <name type="ordered locus">BWG_0636</name>
</gene>
<reference key="1">
    <citation type="journal article" date="2009" name="J. Bacteriol.">
        <title>Genomic sequencing reveals regulatory mutations and recombinational events in the widely used MC4100 lineage of Escherichia coli K-12.</title>
        <authorList>
            <person name="Ferenci T."/>
            <person name="Zhou Z."/>
            <person name="Betteridge T."/>
            <person name="Ren Y."/>
            <person name="Liu Y."/>
            <person name="Feng L."/>
            <person name="Reeves P.R."/>
            <person name="Wang L."/>
        </authorList>
    </citation>
    <scope>NUCLEOTIDE SEQUENCE [LARGE SCALE GENOMIC DNA]</scope>
    <source>
        <strain>K12 / MC4100 / BW2952</strain>
    </source>
</reference>
<feature type="chain" id="PRO_1000213988" description="Cyclic pyranopterin monophosphate synthase">
    <location>
        <begin position="1"/>
        <end position="161"/>
    </location>
</feature>
<feature type="active site" evidence="1">
    <location>
        <position position="128"/>
    </location>
</feature>
<feature type="binding site" evidence="1">
    <location>
        <begin position="75"/>
        <end position="77"/>
    </location>
    <ligand>
        <name>substrate</name>
    </ligand>
</feature>
<feature type="binding site" evidence="1">
    <location>
        <begin position="113"/>
        <end position="114"/>
    </location>
    <ligand>
        <name>substrate</name>
    </ligand>
</feature>
<proteinExistence type="inferred from homology"/>
<name>MOAC_ECOBW</name>
<evidence type="ECO:0000255" key="1">
    <source>
        <dbReference type="HAMAP-Rule" id="MF_01224"/>
    </source>
</evidence>
<protein>
    <recommendedName>
        <fullName evidence="1">Cyclic pyranopterin monophosphate synthase</fullName>
        <ecNumber evidence="1">4.6.1.17</ecNumber>
    </recommendedName>
    <alternativeName>
        <fullName evidence="1">Molybdenum cofactor biosynthesis protein C</fullName>
    </alternativeName>
</protein>
<comment type="function">
    <text evidence="1">Catalyzes the conversion of (8S)-3',8-cyclo-7,8-dihydroguanosine 5'-triphosphate to cyclic pyranopterin monophosphate (cPMP).</text>
</comment>
<comment type="catalytic activity">
    <reaction evidence="1">
        <text>(8S)-3',8-cyclo-7,8-dihydroguanosine 5'-triphosphate = cyclic pyranopterin phosphate + diphosphate</text>
        <dbReference type="Rhea" id="RHEA:49580"/>
        <dbReference type="ChEBI" id="CHEBI:33019"/>
        <dbReference type="ChEBI" id="CHEBI:59648"/>
        <dbReference type="ChEBI" id="CHEBI:131766"/>
        <dbReference type="EC" id="4.6.1.17"/>
    </reaction>
</comment>
<comment type="pathway">
    <text evidence="1">Cofactor biosynthesis; molybdopterin biosynthesis.</text>
</comment>
<comment type="subunit">
    <text evidence="1">Homohexamer; trimer of dimers.</text>
</comment>
<comment type="similarity">
    <text evidence="1">Belongs to the MoaC family.</text>
</comment>
<dbReference type="EC" id="4.6.1.17" evidence="1"/>
<dbReference type="EMBL" id="CP001396">
    <property type="protein sequence ID" value="ACR63799.1"/>
    <property type="molecule type" value="Genomic_DNA"/>
</dbReference>
<dbReference type="RefSeq" id="WP_000080885.1">
    <property type="nucleotide sequence ID" value="NC_012759.1"/>
</dbReference>
<dbReference type="SMR" id="C4ZXV5"/>
<dbReference type="GeneID" id="86945666"/>
<dbReference type="KEGG" id="ebw:BWG_0636"/>
<dbReference type="HOGENOM" id="CLU_074693_1_1_6"/>
<dbReference type="UniPathway" id="UPA00344"/>
<dbReference type="GO" id="GO:0061799">
    <property type="term" value="F:cyclic pyranopterin monophosphate synthase activity"/>
    <property type="evidence" value="ECO:0007669"/>
    <property type="project" value="UniProtKB-UniRule"/>
</dbReference>
<dbReference type="GO" id="GO:0006777">
    <property type="term" value="P:Mo-molybdopterin cofactor biosynthetic process"/>
    <property type="evidence" value="ECO:0007669"/>
    <property type="project" value="UniProtKB-UniRule"/>
</dbReference>
<dbReference type="CDD" id="cd01420">
    <property type="entry name" value="MoaC_PE"/>
    <property type="match status" value="1"/>
</dbReference>
<dbReference type="FunFam" id="3.30.70.640:FF:000001">
    <property type="entry name" value="Cyclic pyranopterin monophosphate synthase"/>
    <property type="match status" value="1"/>
</dbReference>
<dbReference type="Gene3D" id="3.30.70.640">
    <property type="entry name" value="Molybdopterin cofactor biosynthesis C (MoaC) domain"/>
    <property type="match status" value="1"/>
</dbReference>
<dbReference type="HAMAP" id="MF_01224_B">
    <property type="entry name" value="MoaC_B"/>
    <property type="match status" value="1"/>
</dbReference>
<dbReference type="InterPro" id="IPR023045">
    <property type="entry name" value="MoaC"/>
</dbReference>
<dbReference type="InterPro" id="IPR047594">
    <property type="entry name" value="MoaC_bact/euk"/>
</dbReference>
<dbReference type="InterPro" id="IPR036522">
    <property type="entry name" value="MoaC_sf"/>
</dbReference>
<dbReference type="InterPro" id="IPR050105">
    <property type="entry name" value="MoCo_biosynth_MoaA/MoaC"/>
</dbReference>
<dbReference type="InterPro" id="IPR002820">
    <property type="entry name" value="Mopterin_CF_biosynth-C_dom"/>
</dbReference>
<dbReference type="NCBIfam" id="TIGR00581">
    <property type="entry name" value="moaC"/>
    <property type="match status" value="1"/>
</dbReference>
<dbReference type="NCBIfam" id="NF006870">
    <property type="entry name" value="PRK09364.1"/>
    <property type="match status" value="1"/>
</dbReference>
<dbReference type="PANTHER" id="PTHR22960">
    <property type="entry name" value="MOLYBDOPTERIN COFACTOR SYNTHESIS PROTEIN A"/>
    <property type="match status" value="1"/>
</dbReference>
<dbReference type="Pfam" id="PF01967">
    <property type="entry name" value="MoaC"/>
    <property type="match status" value="1"/>
</dbReference>
<dbReference type="SUPFAM" id="SSF55040">
    <property type="entry name" value="Molybdenum cofactor biosynthesis protein C, MoaC"/>
    <property type="match status" value="1"/>
</dbReference>
<organism>
    <name type="scientific">Escherichia coli (strain K12 / MC4100 / BW2952)</name>
    <dbReference type="NCBI Taxonomy" id="595496"/>
    <lineage>
        <taxon>Bacteria</taxon>
        <taxon>Pseudomonadati</taxon>
        <taxon>Pseudomonadota</taxon>
        <taxon>Gammaproteobacteria</taxon>
        <taxon>Enterobacterales</taxon>
        <taxon>Enterobacteriaceae</taxon>
        <taxon>Escherichia</taxon>
    </lineage>
</organism>
<keyword id="KW-0456">Lyase</keyword>
<keyword id="KW-0501">Molybdenum cofactor biosynthesis</keyword>
<sequence length="161" mass="17467">MSQLTHINAAGEAHMVDVSAKAETVREARAEAFVTMRSETLAMIIDGRHHKGDVFATARIAGIQAAKRTWDLIPLCHPLMLSKVEVNLQAEPEHNRVRIETLCRLTGKTGVEMEALTAASVAALTIYDMCKAVQKDMVIGPVRLLAKSGGKSGDFKVEADD</sequence>
<accession>C4ZXV5</accession>